<comment type="function">
    <text evidence="5 6">Acts redundantly with WOX4 downstream of the TDR/PXY receptor kinase to regulate procambial cell proliferation and differentiation in vascular tissue, independently of any role in vascular (PubMed:23578929). Involved in the regulation of gibberellin (GA) biosynthesis pathway (PubMed:28218997). Positively regulates the expression of the GA biosynthesis gene GA3OX1, and negatively regulates the expression of GA2OX1 during secondary growth, which increases bioactive GA content in the inflorescence stem (PubMed:28218997). Promotes vascular cell differentiation in the inflorescence stem (PubMed:28218997).</text>
</comment>
<comment type="function">
    <text evidence="1">Transcription factor which may be involved in developmental processes.</text>
</comment>
<comment type="interaction">
    <interactant intactId="EBI-15193011">
        <id>Q9LM84</id>
    </interactant>
    <interactant intactId="EBI-1396623">
        <id>Q8L8A5</id>
        <label>GIF1</label>
    </interactant>
    <organismsDiffer>false</organismsDiffer>
    <experiments>3</experiments>
</comment>
<comment type="interaction">
    <interactant intactId="EBI-15193011">
        <id>Q9LM84</id>
    </interactant>
    <interactant intactId="EBI-1396863">
        <id>Q9MAL9</id>
        <label>GIF2</label>
    </interactant>
    <organismsDiffer>false</organismsDiffer>
    <experiments>3</experiments>
</comment>
<comment type="interaction">
    <interactant intactId="EBI-15193011">
        <id>Q9LM84</id>
    </interactant>
    <interactant intactId="EBI-15194507">
        <id>Q93VH6</id>
        <label>GIF3</label>
    </interactant>
    <organismsDiffer>false</organismsDiffer>
    <experiments>3</experiments>
</comment>
<comment type="subcellular location">
    <subcellularLocation>
        <location evidence="2">Nucleus</location>
    </subcellularLocation>
</comment>
<comment type="tissue specificity">
    <text evidence="4 6">Expressed in root vasculature, pericycle and stamen (PubMed:18950478). Expressed in the procambium during stem maturation (PubMed:28218997).</text>
</comment>
<comment type="disruption phenotype">
    <text evidence="4 5 6">Retarded growth of the primary root, and partial sterility with aborted and short siliques (PubMed:18950478). Late flowering under long-day conditions (PubMed:18950478, PubMed:28218997). The double mutants wox4 and wox14 exhibit reductions in vascular cell division (PubMed:23578929).</text>
</comment>
<comment type="miscellaneous">
    <text evidence="6">Overexpression of WOX14 increases bioactive gibberellin (GA) production and induces radial growth with strong lignification of vascular stem tissues.</text>
</comment>
<comment type="similarity">
    <text evidence="7">Belongs to the WUS homeobox family.</text>
</comment>
<gene>
    <name type="primary">WOX14</name>
    <name type="synonym">PALE2</name>
    <name type="ordered locus">At1g20700</name>
    <name type="ORF">F2D10.19</name>
</gene>
<organism>
    <name type="scientific">Arabidopsis thaliana</name>
    <name type="common">Mouse-ear cress</name>
    <dbReference type="NCBI Taxonomy" id="3702"/>
    <lineage>
        <taxon>Eukaryota</taxon>
        <taxon>Viridiplantae</taxon>
        <taxon>Streptophyta</taxon>
        <taxon>Embryophyta</taxon>
        <taxon>Tracheophyta</taxon>
        <taxon>Spermatophyta</taxon>
        <taxon>Magnoliopsida</taxon>
        <taxon>eudicotyledons</taxon>
        <taxon>Gunneridae</taxon>
        <taxon>Pentapetalae</taxon>
        <taxon>rosids</taxon>
        <taxon>malvids</taxon>
        <taxon>Brassicales</taxon>
        <taxon>Brassicaceae</taxon>
        <taxon>Camelineae</taxon>
        <taxon>Arabidopsis</taxon>
    </lineage>
</organism>
<feature type="chain" id="PRO_0000049381" description="WUSCHEL-related homeobox 14">
    <location>
        <begin position="1"/>
        <end position="211"/>
    </location>
</feature>
<feature type="DNA-binding region" description="Homeobox; WUS-type" evidence="2">
    <location>
        <begin position="91"/>
        <end position="155"/>
    </location>
</feature>
<feature type="region of interest" description="Disordered" evidence="3">
    <location>
        <begin position="147"/>
        <end position="183"/>
    </location>
</feature>
<accession>Q9LM84</accession>
<sequence length="211" mass="23976">MVKKKKEKEKSKEIEEMDREIQNGAYSGRVMTEEQMEILRKQIAVYAVICDQLVLLHNSLSSYHPLSSGVRPMVGGYFDPMGASSSSHRISTRHRWTPTSTQLQILESIYDEGSGTPNRRRIREIATELSEHGQITETNVYNWFQNRRARSKRKQPQTTTANGQADDVAVTTEERRSCGDSGGLESYEHILFPSPDLGIEHLLSIGKFMET</sequence>
<evidence type="ECO:0000250" key="1"/>
<evidence type="ECO:0000255" key="2">
    <source>
        <dbReference type="PROSITE-ProRule" id="PRU00108"/>
    </source>
</evidence>
<evidence type="ECO:0000256" key="3">
    <source>
        <dbReference type="SAM" id="MobiDB-lite"/>
    </source>
</evidence>
<evidence type="ECO:0000269" key="4">
    <source>
    </source>
</evidence>
<evidence type="ECO:0000269" key="5">
    <source>
    </source>
</evidence>
<evidence type="ECO:0000269" key="6">
    <source>
    </source>
</evidence>
<evidence type="ECO:0000305" key="7"/>
<dbReference type="EMBL" id="AJ441297">
    <property type="protein sequence ID" value="CAD29665.1"/>
    <property type="molecule type" value="mRNA"/>
</dbReference>
<dbReference type="EMBL" id="AC069251">
    <property type="protein sequence ID" value="AAF80616.1"/>
    <property type="molecule type" value="Genomic_DNA"/>
</dbReference>
<dbReference type="EMBL" id="CP002684">
    <property type="protein sequence ID" value="AEE30012.1"/>
    <property type="molecule type" value="Genomic_DNA"/>
</dbReference>
<dbReference type="RefSeq" id="NP_173493.2">
    <property type="nucleotide sequence ID" value="NM_101922.3"/>
</dbReference>
<dbReference type="SMR" id="Q9LM84"/>
<dbReference type="BioGRID" id="23899">
    <property type="interactions" value="60"/>
</dbReference>
<dbReference type="FunCoup" id="Q9LM84">
    <property type="interactions" value="32"/>
</dbReference>
<dbReference type="IntAct" id="Q9LM84">
    <property type="interactions" value="59"/>
</dbReference>
<dbReference type="STRING" id="3702.Q9LM84"/>
<dbReference type="PaxDb" id="3702-AT1G20700.1"/>
<dbReference type="ProteomicsDB" id="242548"/>
<dbReference type="EnsemblPlants" id="AT1G20700.1">
    <property type="protein sequence ID" value="AT1G20700.1"/>
    <property type="gene ID" value="AT1G20700"/>
</dbReference>
<dbReference type="GeneID" id="838660"/>
<dbReference type="Gramene" id="AT1G20700.1">
    <property type="protein sequence ID" value="AT1G20700.1"/>
    <property type="gene ID" value="AT1G20700"/>
</dbReference>
<dbReference type="KEGG" id="ath:AT1G20700"/>
<dbReference type="Araport" id="AT1G20700"/>
<dbReference type="TAIR" id="AT1G20700">
    <property type="gene designation" value="WOX14"/>
</dbReference>
<dbReference type="eggNOG" id="ENOG502QVBF">
    <property type="taxonomic scope" value="Eukaryota"/>
</dbReference>
<dbReference type="HOGENOM" id="CLU_071934_1_0_1"/>
<dbReference type="InParanoid" id="Q9LM84"/>
<dbReference type="PhylomeDB" id="Q9LM84"/>
<dbReference type="PRO" id="PR:Q9LM84"/>
<dbReference type="Proteomes" id="UP000006548">
    <property type="component" value="Chromosome 1"/>
</dbReference>
<dbReference type="ExpressionAtlas" id="Q9LM84">
    <property type="expression patterns" value="baseline and differential"/>
</dbReference>
<dbReference type="GO" id="GO:0005634">
    <property type="term" value="C:nucleus"/>
    <property type="evidence" value="ECO:0007669"/>
    <property type="project" value="UniProtKB-SubCell"/>
</dbReference>
<dbReference type="GO" id="GO:0003700">
    <property type="term" value="F:DNA-binding transcription factor activity"/>
    <property type="evidence" value="ECO:0000250"/>
    <property type="project" value="TAIR"/>
</dbReference>
<dbReference type="GO" id="GO:0000976">
    <property type="term" value="F:transcription cis-regulatory region binding"/>
    <property type="evidence" value="ECO:0000353"/>
    <property type="project" value="TAIR"/>
</dbReference>
<dbReference type="GO" id="GO:0051301">
    <property type="term" value="P:cell division"/>
    <property type="evidence" value="ECO:0000315"/>
    <property type="project" value="TAIR"/>
</dbReference>
<dbReference type="GO" id="GO:0010087">
    <property type="term" value="P:phloem or xylem histogenesis"/>
    <property type="evidence" value="ECO:0000315"/>
    <property type="project" value="TAIR"/>
</dbReference>
<dbReference type="GO" id="GO:0010072">
    <property type="term" value="P:primary shoot apical meristem specification"/>
    <property type="evidence" value="ECO:0000315"/>
    <property type="project" value="TAIR"/>
</dbReference>
<dbReference type="CDD" id="cd00086">
    <property type="entry name" value="homeodomain"/>
    <property type="match status" value="1"/>
</dbReference>
<dbReference type="FunFam" id="1.10.10.60:FF:000118">
    <property type="entry name" value="WUSCHEL-related homeobox 11"/>
    <property type="match status" value="1"/>
</dbReference>
<dbReference type="Gene3D" id="1.10.10.60">
    <property type="entry name" value="Homeodomain-like"/>
    <property type="match status" value="1"/>
</dbReference>
<dbReference type="InterPro" id="IPR001356">
    <property type="entry name" value="HD"/>
</dbReference>
<dbReference type="InterPro" id="IPR009057">
    <property type="entry name" value="Homeodomain-like_sf"/>
</dbReference>
<dbReference type="InterPro" id="IPR044559">
    <property type="entry name" value="WOX13-like"/>
</dbReference>
<dbReference type="PANTHER" id="PTHR46777:SF14">
    <property type="entry name" value="WUSCHEL-RELATED HOMEOBOX 10-RELATED"/>
    <property type="match status" value="1"/>
</dbReference>
<dbReference type="PANTHER" id="PTHR46777">
    <property type="entry name" value="WUSCHEL-RELATED HOMEOBOX 13"/>
    <property type="match status" value="1"/>
</dbReference>
<dbReference type="Pfam" id="PF00046">
    <property type="entry name" value="Homeodomain"/>
    <property type="match status" value="1"/>
</dbReference>
<dbReference type="SMART" id="SM00389">
    <property type="entry name" value="HOX"/>
    <property type="match status" value="1"/>
</dbReference>
<dbReference type="SUPFAM" id="SSF46689">
    <property type="entry name" value="Homeodomain-like"/>
    <property type="match status" value="1"/>
</dbReference>
<dbReference type="PROSITE" id="PS50071">
    <property type="entry name" value="HOMEOBOX_2"/>
    <property type="match status" value="1"/>
</dbReference>
<name>WOX14_ARATH</name>
<proteinExistence type="evidence at protein level"/>
<protein>
    <recommendedName>
        <fullName>WUSCHEL-related homeobox 14</fullName>
    </recommendedName>
    <alternativeName>
        <fullName>Homeodomain protein PALE-2</fullName>
        <shortName>AtPALE2</shortName>
    </alternativeName>
</protein>
<keyword id="KW-0217">Developmental protein</keyword>
<keyword id="KW-0238">DNA-binding</keyword>
<keyword id="KW-0371">Homeobox</keyword>
<keyword id="KW-0539">Nucleus</keyword>
<keyword id="KW-1185">Reference proteome</keyword>
<keyword id="KW-0804">Transcription</keyword>
<keyword id="KW-0805">Transcription regulation</keyword>
<reference key="1">
    <citation type="submission" date="2002-04" db="EMBL/GenBank/DDBJ databases">
        <title>Nucleotide sequence of the AtPALE2.</title>
        <authorList>
            <person name="Sessa G."/>
            <person name="Carabelli M."/>
            <person name="Ciarbelli A.R."/>
            <person name="Ruzza V."/>
            <person name="Steindler C."/>
            <person name="Ruberti I."/>
        </authorList>
    </citation>
    <scope>NUCLEOTIDE SEQUENCE [MRNA]</scope>
</reference>
<reference key="2">
    <citation type="journal article" date="2000" name="Nature">
        <title>Sequence and analysis of chromosome 1 of the plant Arabidopsis thaliana.</title>
        <authorList>
            <person name="Theologis A."/>
            <person name="Ecker J.R."/>
            <person name="Palm C.J."/>
            <person name="Federspiel N.A."/>
            <person name="Kaul S."/>
            <person name="White O."/>
            <person name="Alonso J."/>
            <person name="Altafi H."/>
            <person name="Araujo R."/>
            <person name="Bowman C.L."/>
            <person name="Brooks S.Y."/>
            <person name="Buehler E."/>
            <person name="Chan A."/>
            <person name="Chao Q."/>
            <person name="Chen H."/>
            <person name="Cheuk R.F."/>
            <person name="Chin C.W."/>
            <person name="Chung M.K."/>
            <person name="Conn L."/>
            <person name="Conway A.B."/>
            <person name="Conway A.R."/>
            <person name="Creasy T.H."/>
            <person name="Dewar K."/>
            <person name="Dunn P."/>
            <person name="Etgu P."/>
            <person name="Feldblyum T.V."/>
            <person name="Feng J.-D."/>
            <person name="Fong B."/>
            <person name="Fujii C.Y."/>
            <person name="Gill J.E."/>
            <person name="Goldsmith A.D."/>
            <person name="Haas B."/>
            <person name="Hansen N.F."/>
            <person name="Hughes B."/>
            <person name="Huizar L."/>
            <person name="Hunter J.L."/>
            <person name="Jenkins J."/>
            <person name="Johnson-Hopson C."/>
            <person name="Khan S."/>
            <person name="Khaykin E."/>
            <person name="Kim C.J."/>
            <person name="Koo H.L."/>
            <person name="Kremenetskaia I."/>
            <person name="Kurtz D.B."/>
            <person name="Kwan A."/>
            <person name="Lam B."/>
            <person name="Langin-Hooper S."/>
            <person name="Lee A."/>
            <person name="Lee J.M."/>
            <person name="Lenz C.A."/>
            <person name="Li J.H."/>
            <person name="Li Y.-P."/>
            <person name="Lin X."/>
            <person name="Liu S.X."/>
            <person name="Liu Z.A."/>
            <person name="Luros J.S."/>
            <person name="Maiti R."/>
            <person name="Marziali A."/>
            <person name="Militscher J."/>
            <person name="Miranda M."/>
            <person name="Nguyen M."/>
            <person name="Nierman W.C."/>
            <person name="Osborne B.I."/>
            <person name="Pai G."/>
            <person name="Peterson J."/>
            <person name="Pham P.K."/>
            <person name="Rizzo M."/>
            <person name="Rooney T."/>
            <person name="Rowley D."/>
            <person name="Sakano H."/>
            <person name="Salzberg S.L."/>
            <person name="Schwartz J.R."/>
            <person name="Shinn P."/>
            <person name="Southwick A.M."/>
            <person name="Sun H."/>
            <person name="Tallon L.J."/>
            <person name="Tambunga G."/>
            <person name="Toriumi M.J."/>
            <person name="Town C.D."/>
            <person name="Utterback T."/>
            <person name="Van Aken S."/>
            <person name="Vaysberg M."/>
            <person name="Vysotskaia V.S."/>
            <person name="Walker M."/>
            <person name="Wu D."/>
            <person name="Yu G."/>
            <person name="Fraser C.M."/>
            <person name="Venter J.C."/>
            <person name="Davis R.W."/>
        </authorList>
    </citation>
    <scope>NUCLEOTIDE SEQUENCE [LARGE SCALE GENOMIC DNA]</scope>
    <source>
        <strain>cv. Columbia</strain>
    </source>
</reference>
<reference key="3">
    <citation type="journal article" date="2017" name="Plant J.">
        <title>Araport11: a complete reannotation of the Arabidopsis thaliana reference genome.</title>
        <authorList>
            <person name="Cheng C.Y."/>
            <person name="Krishnakumar V."/>
            <person name="Chan A.P."/>
            <person name="Thibaud-Nissen F."/>
            <person name="Schobel S."/>
            <person name="Town C.D."/>
        </authorList>
    </citation>
    <scope>GENOME REANNOTATION</scope>
    <source>
        <strain>cv. Columbia</strain>
    </source>
</reference>
<reference key="4">
    <citation type="journal article" date="2004" name="Development">
        <title>Expression dynamics of WOX genes mark cell fate decisions during early embryonic patterning in Arabidopsis thaliana.</title>
        <authorList>
            <person name="Haecker A."/>
            <person name="Gross-Hardt R."/>
            <person name="Geiges B."/>
            <person name="Sarkar A."/>
            <person name="Breuninger H."/>
            <person name="Herrmann M."/>
            <person name="Laux T."/>
        </authorList>
    </citation>
    <scope>IDENTIFICATION</scope>
</reference>
<reference key="5">
    <citation type="journal article" date="2008" name="BMC Evol. Biol.">
        <title>Genes of the most conserved WOX clade in plants affect root and flower development in Arabidopsis.</title>
        <authorList>
            <person name="Deveaux Y."/>
            <person name="Toffano-Nioche C."/>
            <person name="Claisse G."/>
            <person name="Thareau V."/>
            <person name="Morin H."/>
            <person name="Laufs P."/>
            <person name="Moreau H."/>
            <person name="Kreis M."/>
            <person name="Lecharny A."/>
        </authorList>
    </citation>
    <scope>TISSUE SPECIFICITY</scope>
    <scope>DISRUPTION PHENOTYPE</scope>
</reference>
<reference key="6">
    <citation type="journal article" date="2013" name="Development">
        <title>WOX4 and WOX14 act downstream of the PXY receptor kinase to regulate plant vascular proliferation independently of any role in vascular organisation.</title>
        <authorList>
            <person name="Etchells J.P."/>
            <person name="Provost C.M."/>
            <person name="Mishra L."/>
            <person name="Turner S.R."/>
        </authorList>
    </citation>
    <scope>FUNCTION</scope>
    <scope>DISRUPTION PHENOTYPE</scope>
</reference>
<reference key="7">
    <citation type="journal article" date="2017" name="Plant J.">
        <title>WOX14 promotes bioactive gibberellin synthesis and vascular cell differentiation in Arabidopsis.</title>
        <authorList>
            <person name="Denis E."/>
            <person name="Kbiri N."/>
            <person name="Mary V."/>
            <person name="Claisse G."/>
            <person name="Conde-E-Silva N."/>
            <person name="Kreis M."/>
            <person name="Deveaux Y."/>
        </authorList>
    </citation>
    <scope>FUNCTION</scope>
    <scope>DISRUPTION PHENOTYPE</scope>
</reference>